<comment type="similarity">
    <text evidence="1">Belongs to the bacterial ribosomal protein bL32 family.</text>
</comment>
<name>RL32_SALG2</name>
<reference key="1">
    <citation type="journal article" date="2008" name="Genome Res.">
        <title>Comparative genome analysis of Salmonella enteritidis PT4 and Salmonella gallinarum 287/91 provides insights into evolutionary and host adaptation pathways.</title>
        <authorList>
            <person name="Thomson N.R."/>
            <person name="Clayton D.J."/>
            <person name="Windhorst D."/>
            <person name="Vernikos G."/>
            <person name="Davidson S."/>
            <person name="Churcher C."/>
            <person name="Quail M.A."/>
            <person name="Stevens M."/>
            <person name="Jones M.A."/>
            <person name="Watson M."/>
            <person name="Barron A."/>
            <person name="Layton A."/>
            <person name="Pickard D."/>
            <person name="Kingsley R.A."/>
            <person name="Bignell A."/>
            <person name="Clark L."/>
            <person name="Harris B."/>
            <person name="Ormond D."/>
            <person name="Abdellah Z."/>
            <person name="Brooks K."/>
            <person name="Cherevach I."/>
            <person name="Chillingworth T."/>
            <person name="Woodward J."/>
            <person name="Norberczak H."/>
            <person name="Lord A."/>
            <person name="Arrowsmith C."/>
            <person name="Jagels K."/>
            <person name="Moule S."/>
            <person name="Mungall K."/>
            <person name="Saunders M."/>
            <person name="Whitehead S."/>
            <person name="Chabalgoity J.A."/>
            <person name="Maskell D."/>
            <person name="Humphreys T."/>
            <person name="Roberts M."/>
            <person name="Barrow P.A."/>
            <person name="Dougan G."/>
            <person name="Parkhill J."/>
        </authorList>
    </citation>
    <scope>NUCLEOTIDE SEQUENCE [LARGE SCALE GENOMIC DNA]</scope>
    <source>
        <strain>287/91 / NCTC 13346</strain>
    </source>
</reference>
<organism>
    <name type="scientific">Salmonella gallinarum (strain 287/91 / NCTC 13346)</name>
    <dbReference type="NCBI Taxonomy" id="550538"/>
    <lineage>
        <taxon>Bacteria</taxon>
        <taxon>Pseudomonadati</taxon>
        <taxon>Pseudomonadota</taxon>
        <taxon>Gammaproteobacteria</taxon>
        <taxon>Enterobacterales</taxon>
        <taxon>Enterobacteriaceae</taxon>
        <taxon>Salmonella</taxon>
    </lineage>
</organism>
<evidence type="ECO:0000255" key="1">
    <source>
        <dbReference type="HAMAP-Rule" id="MF_00340"/>
    </source>
</evidence>
<evidence type="ECO:0000256" key="2">
    <source>
        <dbReference type="SAM" id="MobiDB-lite"/>
    </source>
</evidence>
<evidence type="ECO:0000305" key="3"/>
<feature type="chain" id="PRO_1000120169" description="Large ribosomal subunit protein bL32">
    <location>
        <begin position="1"/>
        <end position="57"/>
    </location>
</feature>
<feature type="region of interest" description="Disordered" evidence="2">
    <location>
        <begin position="1"/>
        <end position="38"/>
    </location>
</feature>
<dbReference type="EMBL" id="AM933173">
    <property type="protein sequence ID" value="CAR37782.1"/>
    <property type="molecule type" value="Genomic_DNA"/>
</dbReference>
<dbReference type="RefSeq" id="WP_000290727.1">
    <property type="nucleotide sequence ID" value="NC_011274.1"/>
</dbReference>
<dbReference type="SMR" id="B5RBB1"/>
<dbReference type="GeneID" id="93776319"/>
<dbReference type="KEGG" id="seg:SG1931"/>
<dbReference type="HOGENOM" id="CLU_129084_2_1_6"/>
<dbReference type="Proteomes" id="UP000008321">
    <property type="component" value="Chromosome"/>
</dbReference>
<dbReference type="GO" id="GO:0015934">
    <property type="term" value="C:large ribosomal subunit"/>
    <property type="evidence" value="ECO:0007669"/>
    <property type="project" value="InterPro"/>
</dbReference>
<dbReference type="GO" id="GO:0003735">
    <property type="term" value="F:structural constituent of ribosome"/>
    <property type="evidence" value="ECO:0007669"/>
    <property type="project" value="InterPro"/>
</dbReference>
<dbReference type="GO" id="GO:0006412">
    <property type="term" value="P:translation"/>
    <property type="evidence" value="ECO:0007669"/>
    <property type="project" value="UniProtKB-UniRule"/>
</dbReference>
<dbReference type="HAMAP" id="MF_00340">
    <property type="entry name" value="Ribosomal_bL32"/>
    <property type="match status" value="1"/>
</dbReference>
<dbReference type="InterPro" id="IPR002677">
    <property type="entry name" value="Ribosomal_bL32"/>
</dbReference>
<dbReference type="InterPro" id="IPR044957">
    <property type="entry name" value="Ribosomal_bL32_bact"/>
</dbReference>
<dbReference type="InterPro" id="IPR011332">
    <property type="entry name" value="Ribosomal_zn-bd"/>
</dbReference>
<dbReference type="NCBIfam" id="TIGR01031">
    <property type="entry name" value="rpmF_bact"/>
    <property type="match status" value="1"/>
</dbReference>
<dbReference type="PANTHER" id="PTHR35534">
    <property type="entry name" value="50S RIBOSOMAL PROTEIN L32"/>
    <property type="match status" value="1"/>
</dbReference>
<dbReference type="PANTHER" id="PTHR35534:SF1">
    <property type="entry name" value="LARGE RIBOSOMAL SUBUNIT PROTEIN BL32"/>
    <property type="match status" value="1"/>
</dbReference>
<dbReference type="Pfam" id="PF01783">
    <property type="entry name" value="Ribosomal_L32p"/>
    <property type="match status" value="1"/>
</dbReference>
<dbReference type="SUPFAM" id="SSF57829">
    <property type="entry name" value="Zn-binding ribosomal proteins"/>
    <property type="match status" value="1"/>
</dbReference>
<proteinExistence type="inferred from homology"/>
<sequence length="57" mass="6446">MAVQQNKPTRSKRGMRRSHDALTAVTSLSVDKTSGEKHLRHHITADGYYRGRKVIAK</sequence>
<gene>
    <name evidence="1" type="primary">rpmF</name>
    <name type="ordered locus">SG1931</name>
</gene>
<keyword id="KW-0687">Ribonucleoprotein</keyword>
<keyword id="KW-0689">Ribosomal protein</keyword>
<accession>B5RBB1</accession>
<protein>
    <recommendedName>
        <fullName evidence="1">Large ribosomal subunit protein bL32</fullName>
    </recommendedName>
    <alternativeName>
        <fullName evidence="3">50S ribosomal protein L32</fullName>
    </alternativeName>
</protein>